<name>GRPE2_BUCAP</name>
<organism>
    <name type="scientific">Buchnera aphidicola subsp. Schizaphis graminum (strain Sg)</name>
    <dbReference type="NCBI Taxonomy" id="198804"/>
    <lineage>
        <taxon>Bacteria</taxon>
        <taxon>Pseudomonadati</taxon>
        <taxon>Pseudomonadota</taxon>
        <taxon>Gammaproteobacteria</taxon>
        <taxon>Enterobacterales</taxon>
        <taxon>Erwiniaceae</taxon>
        <taxon>Buchnera</taxon>
    </lineage>
</organism>
<sequence>MDNQEKKTNYQNTDKENDLEKNKEKKNDESIFQNKKMNEIREKIFKNKKEINNLKLRHLANIENIKKNTEKKIKKIKNAEIENFFKQIIPIINNLEDILTISTKLNLNDEPSIQGIELTLKSLLSILIKFGVKIEGKKNEIFNPKIHDVILTESSNTIEPNYIISVKKKGFIFKKTILRKAAVVISKT</sequence>
<dbReference type="EMBL" id="AE013218">
    <property type="protein sequence ID" value="AAM67743.1"/>
    <property type="molecule type" value="Genomic_DNA"/>
</dbReference>
<dbReference type="RefSeq" id="WP_011053710.1">
    <property type="nucleotide sequence ID" value="NC_004061.1"/>
</dbReference>
<dbReference type="SMR" id="Q8K9V9"/>
<dbReference type="STRING" id="198804.BUsg_178"/>
<dbReference type="GeneID" id="93003646"/>
<dbReference type="KEGG" id="bas:BUsg_178"/>
<dbReference type="eggNOG" id="COG0576">
    <property type="taxonomic scope" value="Bacteria"/>
</dbReference>
<dbReference type="HOGENOM" id="CLU_057217_6_0_6"/>
<dbReference type="Proteomes" id="UP000000416">
    <property type="component" value="Chromosome"/>
</dbReference>
<dbReference type="GO" id="GO:0005737">
    <property type="term" value="C:cytoplasm"/>
    <property type="evidence" value="ECO:0007669"/>
    <property type="project" value="UniProtKB-SubCell"/>
</dbReference>
<dbReference type="GO" id="GO:0000774">
    <property type="term" value="F:adenyl-nucleotide exchange factor activity"/>
    <property type="evidence" value="ECO:0007669"/>
    <property type="project" value="InterPro"/>
</dbReference>
<dbReference type="GO" id="GO:0042803">
    <property type="term" value="F:protein homodimerization activity"/>
    <property type="evidence" value="ECO:0007669"/>
    <property type="project" value="InterPro"/>
</dbReference>
<dbReference type="GO" id="GO:0051087">
    <property type="term" value="F:protein-folding chaperone binding"/>
    <property type="evidence" value="ECO:0007669"/>
    <property type="project" value="InterPro"/>
</dbReference>
<dbReference type="GO" id="GO:0051082">
    <property type="term" value="F:unfolded protein binding"/>
    <property type="evidence" value="ECO:0007669"/>
    <property type="project" value="TreeGrafter"/>
</dbReference>
<dbReference type="GO" id="GO:0006457">
    <property type="term" value="P:protein folding"/>
    <property type="evidence" value="ECO:0007669"/>
    <property type="project" value="InterPro"/>
</dbReference>
<dbReference type="CDD" id="cd00446">
    <property type="entry name" value="GrpE"/>
    <property type="match status" value="1"/>
</dbReference>
<dbReference type="Gene3D" id="3.90.20.20">
    <property type="match status" value="1"/>
</dbReference>
<dbReference type="Gene3D" id="2.30.22.10">
    <property type="entry name" value="Head domain of nucleotide exchange factor GrpE"/>
    <property type="match status" value="1"/>
</dbReference>
<dbReference type="HAMAP" id="MF_01151">
    <property type="entry name" value="GrpE"/>
    <property type="match status" value="1"/>
</dbReference>
<dbReference type="InterPro" id="IPR000740">
    <property type="entry name" value="GrpE"/>
</dbReference>
<dbReference type="InterPro" id="IPR013805">
    <property type="entry name" value="GrpE_coiled_coil"/>
</dbReference>
<dbReference type="InterPro" id="IPR009012">
    <property type="entry name" value="GrpE_head"/>
</dbReference>
<dbReference type="PANTHER" id="PTHR21237">
    <property type="entry name" value="GRPE PROTEIN"/>
    <property type="match status" value="1"/>
</dbReference>
<dbReference type="PANTHER" id="PTHR21237:SF23">
    <property type="entry name" value="GRPE PROTEIN HOMOLOG, MITOCHONDRIAL"/>
    <property type="match status" value="1"/>
</dbReference>
<dbReference type="Pfam" id="PF01025">
    <property type="entry name" value="GrpE"/>
    <property type="match status" value="1"/>
</dbReference>
<dbReference type="PRINTS" id="PR00773">
    <property type="entry name" value="GRPEPROTEIN"/>
</dbReference>
<dbReference type="SUPFAM" id="SSF58014">
    <property type="entry name" value="Coiled-coil domain of nucleotide exchange factor GrpE"/>
    <property type="match status" value="1"/>
</dbReference>
<dbReference type="SUPFAM" id="SSF51064">
    <property type="entry name" value="Head domain of nucleotide exchange factor GrpE"/>
    <property type="match status" value="1"/>
</dbReference>
<dbReference type="PROSITE" id="PS01071">
    <property type="entry name" value="GRPE"/>
    <property type="match status" value="1"/>
</dbReference>
<keyword id="KW-0143">Chaperone</keyword>
<keyword id="KW-0963">Cytoplasm</keyword>
<keyword id="KW-0346">Stress response</keyword>
<proteinExistence type="inferred from homology"/>
<feature type="chain" id="PRO_0000113761" description="Protein GrpE 2">
    <location>
        <begin position="1"/>
        <end position="188"/>
    </location>
</feature>
<feature type="region of interest" description="Disordered" evidence="2">
    <location>
        <begin position="1"/>
        <end position="33"/>
    </location>
</feature>
<feature type="compositionally biased region" description="Basic and acidic residues" evidence="2">
    <location>
        <begin position="1"/>
        <end position="29"/>
    </location>
</feature>
<reference key="1">
    <citation type="journal article" date="2002" name="Science">
        <title>50 million years of genomic stasis in endosymbiotic bacteria.</title>
        <authorList>
            <person name="Tamas I."/>
            <person name="Klasson L."/>
            <person name="Canbaeck B."/>
            <person name="Naeslund A.K."/>
            <person name="Eriksson A.-S."/>
            <person name="Wernegreen J.J."/>
            <person name="Sandstroem J.P."/>
            <person name="Moran N.A."/>
            <person name="Andersson S.G.E."/>
        </authorList>
    </citation>
    <scope>NUCLEOTIDE SEQUENCE [LARGE SCALE GENOMIC DNA]</scope>
    <source>
        <strain>Sg</strain>
    </source>
</reference>
<accession>Q8K9V9</accession>
<evidence type="ECO:0000255" key="1">
    <source>
        <dbReference type="HAMAP-Rule" id="MF_01151"/>
    </source>
</evidence>
<evidence type="ECO:0000256" key="2">
    <source>
        <dbReference type="SAM" id="MobiDB-lite"/>
    </source>
</evidence>
<protein>
    <recommendedName>
        <fullName evidence="1">Protein GrpE 2</fullName>
    </recommendedName>
    <alternativeName>
        <fullName evidence="1">HSP-70 cofactor 2</fullName>
    </alternativeName>
</protein>
<comment type="function">
    <text evidence="1">Participates actively in the response to hyperosmotic and heat shock by preventing the aggregation of stress-denatured proteins, in association with DnaK and GrpE. It is the nucleotide exchange factor for DnaK and may function as a thermosensor. Unfolded proteins bind initially to DnaJ; upon interaction with the DnaJ-bound protein, DnaK hydrolyzes its bound ATP, resulting in the formation of a stable complex. GrpE releases ADP from DnaK; ATP binding to DnaK triggers the release of the substrate protein, thus completing the reaction cycle. Several rounds of ATP-dependent interactions between DnaJ, DnaK and GrpE are required for fully efficient folding.</text>
</comment>
<comment type="subunit">
    <text evidence="1">Homodimer.</text>
</comment>
<comment type="subcellular location">
    <subcellularLocation>
        <location evidence="1">Cytoplasm</location>
    </subcellularLocation>
</comment>
<comment type="similarity">
    <text evidence="1">Belongs to the GrpE family.</text>
</comment>
<gene>
    <name evidence="1" type="primary">grpE2</name>
    <name type="ordered locus">BUsg_178</name>
</gene>